<proteinExistence type="inferred from homology"/>
<evidence type="ECO:0000255" key="1">
    <source>
        <dbReference type="HAMAP-Rule" id="MF_01261"/>
    </source>
</evidence>
<sequence length="429" mass="47136">MTQYAASAGDAIVDPATHGLDVYAVGGAIRDTLLGLPVQDRDYVVVGATPEAMEARGFRTVGKDFPVFLHPRTQAEYALARTERKTAAGYKGFSVYYAPDVTLEDDLVRRDLTINAMAQRVAEDGALVGPVIDPYGGQADLASRTFRHVSEAFVEDPVRILRVARFAARFAEFHVAPETRALMQRMAEAGEVDALVPERVWQELARGLLEARPSRLFAVLRDCGALVRLLPELDRLWGVPQRADYHPEVDTGVHTMMVVDTAAAMDTPLPVRFAALVHDLGKGTTPADILPRHVGHEARGLPMIEDICRRLRVPTDCRDLAIMVAREHGNIHRSDGFDATALVRLLERCDALRKPERFRQALLACEADARGRLGFEQRDYPQPVRLLRALQAAASIDAGAVAKRYADNPAHIKQAVHVARIEAVAQAGL</sequence>
<name>CCA_RALN1</name>
<dbReference type="EC" id="2.7.7.72" evidence="1"/>
<dbReference type="EC" id="3.1.3.-" evidence="1"/>
<dbReference type="EC" id="3.1.4.-" evidence="1"/>
<dbReference type="EMBL" id="AL646052">
    <property type="protein sequence ID" value="CAD13613.1"/>
    <property type="molecule type" value="Genomic_DNA"/>
</dbReference>
<dbReference type="RefSeq" id="WP_043876522.1">
    <property type="nucleotide sequence ID" value="NC_003295.1"/>
</dbReference>
<dbReference type="SMR" id="Q8Y395"/>
<dbReference type="STRING" id="267608.RSc0085"/>
<dbReference type="EnsemblBacteria" id="CAD13613">
    <property type="protein sequence ID" value="CAD13613"/>
    <property type="gene ID" value="RSc0085"/>
</dbReference>
<dbReference type="KEGG" id="rso:RSc0085"/>
<dbReference type="PATRIC" id="fig|267608.8.peg.91"/>
<dbReference type="eggNOG" id="COG0617">
    <property type="taxonomic scope" value="Bacteria"/>
</dbReference>
<dbReference type="HOGENOM" id="CLU_015961_1_1_4"/>
<dbReference type="Proteomes" id="UP000001436">
    <property type="component" value="Chromosome"/>
</dbReference>
<dbReference type="GO" id="GO:0005524">
    <property type="term" value="F:ATP binding"/>
    <property type="evidence" value="ECO:0007669"/>
    <property type="project" value="UniProtKB-UniRule"/>
</dbReference>
<dbReference type="GO" id="GO:0004810">
    <property type="term" value="F:CCA tRNA nucleotidyltransferase activity"/>
    <property type="evidence" value="ECO:0007669"/>
    <property type="project" value="UniProtKB-UniRule"/>
</dbReference>
<dbReference type="GO" id="GO:0004112">
    <property type="term" value="F:cyclic-nucleotide phosphodiesterase activity"/>
    <property type="evidence" value="ECO:0007669"/>
    <property type="project" value="UniProtKB-UniRule"/>
</dbReference>
<dbReference type="GO" id="GO:0000287">
    <property type="term" value="F:magnesium ion binding"/>
    <property type="evidence" value="ECO:0007669"/>
    <property type="project" value="UniProtKB-UniRule"/>
</dbReference>
<dbReference type="GO" id="GO:0016791">
    <property type="term" value="F:phosphatase activity"/>
    <property type="evidence" value="ECO:0007669"/>
    <property type="project" value="UniProtKB-UniRule"/>
</dbReference>
<dbReference type="GO" id="GO:0000049">
    <property type="term" value="F:tRNA binding"/>
    <property type="evidence" value="ECO:0007669"/>
    <property type="project" value="UniProtKB-UniRule"/>
</dbReference>
<dbReference type="GO" id="GO:0042245">
    <property type="term" value="P:RNA repair"/>
    <property type="evidence" value="ECO:0007669"/>
    <property type="project" value="UniProtKB-KW"/>
</dbReference>
<dbReference type="GO" id="GO:0001680">
    <property type="term" value="P:tRNA 3'-terminal CCA addition"/>
    <property type="evidence" value="ECO:0007669"/>
    <property type="project" value="UniProtKB-UniRule"/>
</dbReference>
<dbReference type="CDD" id="cd00077">
    <property type="entry name" value="HDc"/>
    <property type="match status" value="1"/>
</dbReference>
<dbReference type="CDD" id="cd05398">
    <property type="entry name" value="NT_ClassII-CCAase"/>
    <property type="match status" value="1"/>
</dbReference>
<dbReference type="Gene3D" id="3.30.460.10">
    <property type="entry name" value="Beta Polymerase, domain 2"/>
    <property type="match status" value="1"/>
</dbReference>
<dbReference type="Gene3D" id="1.10.3090.10">
    <property type="entry name" value="cca-adding enzyme, domain 2"/>
    <property type="match status" value="1"/>
</dbReference>
<dbReference type="HAMAP" id="MF_01261">
    <property type="entry name" value="CCA_bact_type1"/>
    <property type="match status" value="1"/>
</dbReference>
<dbReference type="InterPro" id="IPR012006">
    <property type="entry name" value="CCA_bact"/>
</dbReference>
<dbReference type="InterPro" id="IPR003607">
    <property type="entry name" value="HD/PDEase_dom"/>
</dbReference>
<dbReference type="InterPro" id="IPR006674">
    <property type="entry name" value="HD_domain"/>
</dbReference>
<dbReference type="InterPro" id="IPR043519">
    <property type="entry name" value="NT_sf"/>
</dbReference>
<dbReference type="InterPro" id="IPR002646">
    <property type="entry name" value="PolA_pol_head_dom"/>
</dbReference>
<dbReference type="InterPro" id="IPR032828">
    <property type="entry name" value="PolyA_RNA-bd"/>
</dbReference>
<dbReference type="InterPro" id="IPR050124">
    <property type="entry name" value="tRNA_CCA-adding_enzyme"/>
</dbReference>
<dbReference type="NCBIfam" id="NF008137">
    <property type="entry name" value="PRK10885.1"/>
    <property type="match status" value="1"/>
</dbReference>
<dbReference type="PANTHER" id="PTHR47545">
    <property type="entry name" value="MULTIFUNCTIONAL CCA PROTEIN"/>
    <property type="match status" value="1"/>
</dbReference>
<dbReference type="PANTHER" id="PTHR47545:SF1">
    <property type="entry name" value="MULTIFUNCTIONAL CCA PROTEIN"/>
    <property type="match status" value="1"/>
</dbReference>
<dbReference type="Pfam" id="PF01966">
    <property type="entry name" value="HD"/>
    <property type="match status" value="1"/>
</dbReference>
<dbReference type="Pfam" id="PF01743">
    <property type="entry name" value="PolyA_pol"/>
    <property type="match status" value="1"/>
</dbReference>
<dbReference type="Pfam" id="PF12627">
    <property type="entry name" value="PolyA_pol_RNAbd"/>
    <property type="match status" value="1"/>
</dbReference>
<dbReference type="PIRSF" id="PIRSF000813">
    <property type="entry name" value="CCA_bact"/>
    <property type="match status" value="1"/>
</dbReference>
<dbReference type="SUPFAM" id="SSF81301">
    <property type="entry name" value="Nucleotidyltransferase"/>
    <property type="match status" value="1"/>
</dbReference>
<dbReference type="SUPFAM" id="SSF81891">
    <property type="entry name" value="Poly A polymerase C-terminal region-like"/>
    <property type="match status" value="1"/>
</dbReference>
<dbReference type="PROSITE" id="PS51831">
    <property type="entry name" value="HD"/>
    <property type="match status" value="1"/>
</dbReference>
<keyword id="KW-0067">ATP-binding</keyword>
<keyword id="KW-0378">Hydrolase</keyword>
<keyword id="KW-0460">Magnesium</keyword>
<keyword id="KW-0479">Metal-binding</keyword>
<keyword id="KW-0511">Multifunctional enzyme</keyword>
<keyword id="KW-0533">Nickel</keyword>
<keyword id="KW-0547">Nucleotide-binding</keyword>
<keyword id="KW-0548">Nucleotidyltransferase</keyword>
<keyword id="KW-1185">Reference proteome</keyword>
<keyword id="KW-0692">RNA repair</keyword>
<keyword id="KW-0694">RNA-binding</keyword>
<keyword id="KW-0808">Transferase</keyword>
<keyword id="KW-0819">tRNA processing</keyword>
<feature type="chain" id="PRO_0000138996" description="Multifunctional CCA protein">
    <location>
        <begin position="1"/>
        <end position="429"/>
    </location>
</feature>
<feature type="domain" description="HD" evidence="1">
    <location>
        <begin position="251"/>
        <end position="352"/>
    </location>
</feature>
<feature type="binding site" evidence="1">
    <location>
        <position position="27"/>
    </location>
    <ligand>
        <name>ATP</name>
        <dbReference type="ChEBI" id="CHEBI:30616"/>
    </ligand>
</feature>
<feature type="binding site" evidence="1">
    <location>
        <position position="27"/>
    </location>
    <ligand>
        <name>CTP</name>
        <dbReference type="ChEBI" id="CHEBI:37563"/>
    </ligand>
</feature>
<feature type="binding site" evidence="1">
    <location>
        <position position="30"/>
    </location>
    <ligand>
        <name>ATP</name>
        <dbReference type="ChEBI" id="CHEBI:30616"/>
    </ligand>
</feature>
<feature type="binding site" evidence="1">
    <location>
        <position position="30"/>
    </location>
    <ligand>
        <name>CTP</name>
        <dbReference type="ChEBI" id="CHEBI:37563"/>
    </ligand>
</feature>
<feature type="binding site" evidence="1">
    <location>
        <position position="40"/>
    </location>
    <ligand>
        <name>Mg(2+)</name>
        <dbReference type="ChEBI" id="CHEBI:18420"/>
    </ligand>
</feature>
<feature type="binding site" evidence="1">
    <location>
        <position position="42"/>
    </location>
    <ligand>
        <name>Mg(2+)</name>
        <dbReference type="ChEBI" id="CHEBI:18420"/>
    </ligand>
</feature>
<feature type="binding site" evidence="1">
    <location>
        <position position="110"/>
    </location>
    <ligand>
        <name>ATP</name>
        <dbReference type="ChEBI" id="CHEBI:30616"/>
    </ligand>
</feature>
<feature type="binding site" evidence="1">
    <location>
        <position position="110"/>
    </location>
    <ligand>
        <name>CTP</name>
        <dbReference type="ChEBI" id="CHEBI:37563"/>
    </ligand>
</feature>
<feature type="binding site" evidence="1">
    <location>
        <position position="162"/>
    </location>
    <ligand>
        <name>ATP</name>
        <dbReference type="ChEBI" id="CHEBI:30616"/>
    </ligand>
</feature>
<feature type="binding site" evidence="1">
    <location>
        <position position="162"/>
    </location>
    <ligand>
        <name>CTP</name>
        <dbReference type="ChEBI" id="CHEBI:37563"/>
    </ligand>
</feature>
<feature type="binding site" evidence="1">
    <location>
        <position position="165"/>
    </location>
    <ligand>
        <name>ATP</name>
        <dbReference type="ChEBI" id="CHEBI:30616"/>
    </ligand>
</feature>
<feature type="binding site" evidence="1">
    <location>
        <position position="165"/>
    </location>
    <ligand>
        <name>CTP</name>
        <dbReference type="ChEBI" id="CHEBI:37563"/>
    </ligand>
</feature>
<accession>Q8Y395</accession>
<comment type="function">
    <text evidence="1">Catalyzes the addition and repair of the essential 3'-terminal CCA sequence in tRNAs without using a nucleic acid template. Adds these three nucleotides in the order of C, C, and A to the tRNA nucleotide-73, using CTP and ATP as substrates and producing inorganic pyrophosphate. tRNA 3'-terminal CCA addition is required both for tRNA processing and repair. Also involved in tRNA surveillance by mediating tandem CCA addition to generate a CCACCA at the 3' terminus of unstable tRNAs. While stable tRNAs receive only 3'-terminal CCA, unstable tRNAs are marked with CCACCA and rapidly degraded.</text>
</comment>
<comment type="catalytic activity">
    <reaction evidence="1">
        <text>a tRNA precursor + 2 CTP + ATP = a tRNA with a 3' CCA end + 3 diphosphate</text>
        <dbReference type="Rhea" id="RHEA:14433"/>
        <dbReference type="Rhea" id="RHEA-COMP:10465"/>
        <dbReference type="Rhea" id="RHEA-COMP:10468"/>
        <dbReference type="ChEBI" id="CHEBI:30616"/>
        <dbReference type="ChEBI" id="CHEBI:33019"/>
        <dbReference type="ChEBI" id="CHEBI:37563"/>
        <dbReference type="ChEBI" id="CHEBI:74896"/>
        <dbReference type="ChEBI" id="CHEBI:83071"/>
        <dbReference type="EC" id="2.7.7.72"/>
    </reaction>
</comment>
<comment type="catalytic activity">
    <reaction evidence="1">
        <text>a tRNA with a 3' CCA end + 2 CTP + ATP = a tRNA with a 3' CCACCA end + 3 diphosphate</text>
        <dbReference type="Rhea" id="RHEA:76235"/>
        <dbReference type="Rhea" id="RHEA-COMP:10468"/>
        <dbReference type="Rhea" id="RHEA-COMP:18655"/>
        <dbReference type="ChEBI" id="CHEBI:30616"/>
        <dbReference type="ChEBI" id="CHEBI:33019"/>
        <dbReference type="ChEBI" id="CHEBI:37563"/>
        <dbReference type="ChEBI" id="CHEBI:83071"/>
        <dbReference type="ChEBI" id="CHEBI:195187"/>
    </reaction>
    <physiologicalReaction direction="left-to-right" evidence="1">
        <dbReference type="Rhea" id="RHEA:76236"/>
    </physiologicalReaction>
</comment>
<comment type="cofactor">
    <cofactor evidence="1">
        <name>Mg(2+)</name>
        <dbReference type="ChEBI" id="CHEBI:18420"/>
    </cofactor>
    <text evidence="1">Magnesium is required for nucleotidyltransferase activity.</text>
</comment>
<comment type="cofactor">
    <cofactor evidence="1">
        <name>Ni(2+)</name>
        <dbReference type="ChEBI" id="CHEBI:49786"/>
    </cofactor>
    <text evidence="1">Nickel for phosphatase activity.</text>
</comment>
<comment type="subunit">
    <text evidence="1">Monomer. Can also form homodimers and oligomers.</text>
</comment>
<comment type="domain">
    <text evidence="1">Comprises two domains: an N-terminal domain containing the nucleotidyltransferase activity and a C-terminal HD domain associated with both phosphodiesterase and phosphatase activities.</text>
</comment>
<comment type="miscellaneous">
    <text evidence="1">A single active site specifically recognizes both ATP and CTP and is responsible for their addition.</text>
</comment>
<comment type="similarity">
    <text evidence="1">Belongs to the tRNA nucleotidyltransferase/poly(A) polymerase family. Bacterial CCA-adding enzyme type 1 subfamily.</text>
</comment>
<protein>
    <recommendedName>
        <fullName evidence="1">Multifunctional CCA protein</fullName>
    </recommendedName>
    <domain>
        <recommendedName>
            <fullName evidence="1">CCA-adding enzyme</fullName>
            <ecNumber evidence="1">2.7.7.72</ecNumber>
        </recommendedName>
        <alternativeName>
            <fullName evidence="1">CCA tRNA nucleotidyltransferase</fullName>
        </alternativeName>
        <alternativeName>
            <fullName evidence="1">tRNA CCA-pyrophosphorylase</fullName>
        </alternativeName>
        <alternativeName>
            <fullName evidence="1">tRNA adenylyl-/cytidylyl-transferase</fullName>
        </alternativeName>
        <alternativeName>
            <fullName evidence="1">tRNA nucleotidyltransferase</fullName>
        </alternativeName>
        <alternativeName>
            <fullName evidence="1">tRNA-NT</fullName>
        </alternativeName>
    </domain>
    <domain>
        <recommendedName>
            <fullName evidence="1">2'-nucleotidase</fullName>
            <ecNumber evidence="1">3.1.3.-</ecNumber>
        </recommendedName>
    </domain>
    <domain>
        <recommendedName>
            <fullName evidence="1">2',3'-cyclic phosphodiesterase</fullName>
            <ecNumber evidence="1">3.1.4.-</ecNumber>
        </recommendedName>
    </domain>
    <domain>
        <recommendedName>
            <fullName evidence="1">Phosphatase</fullName>
            <ecNumber evidence="1">3.1.3.-</ecNumber>
        </recommendedName>
    </domain>
</protein>
<gene>
    <name evidence="1" type="primary">cca</name>
    <name type="ordered locus">RSc0085</name>
    <name type="ORF">RS02259</name>
</gene>
<organism>
    <name type="scientific">Ralstonia nicotianae (strain ATCC BAA-1114 / GMI1000)</name>
    <name type="common">Ralstonia solanacearum</name>
    <dbReference type="NCBI Taxonomy" id="267608"/>
    <lineage>
        <taxon>Bacteria</taxon>
        <taxon>Pseudomonadati</taxon>
        <taxon>Pseudomonadota</taxon>
        <taxon>Betaproteobacteria</taxon>
        <taxon>Burkholderiales</taxon>
        <taxon>Burkholderiaceae</taxon>
        <taxon>Ralstonia</taxon>
        <taxon>Ralstonia solanacearum species complex</taxon>
    </lineage>
</organism>
<reference key="1">
    <citation type="journal article" date="2002" name="Nature">
        <title>Genome sequence of the plant pathogen Ralstonia solanacearum.</title>
        <authorList>
            <person name="Salanoubat M."/>
            <person name="Genin S."/>
            <person name="Artiguenave F."/>
            <person name="Gouzy J."/>
            <person name="Mangenot S."/>
            <person name="Arlat M."/>
            <person name="Billault A."/>
            <person name="Brottier P."/>
            <person name="Camus J.-C."/>
            <person name="Cattolico L."/>
            <person name="Chandler M."/>
            <person name="Choisne N."/>
            <person name="Claudel-Renard C."/>
            <person name="Cunnac S."/>
            <person name="Demange N."/>
            <person name="Gaspin C."/>
            <person name="Lavie M."/>
            <person name="Moisan A."/>
            <person name="Robert C."/>
            <person name="Saurin W."/>
            <person name="Schiex T."/>
            <person name="Siguier P."/>
            <person name="Thebault P."/>
            <person name="Whalen M."/>
            <person name="Wincker P."/>
            <person name="Levy M."/>
            <person name="Weissenbach J."/>
            <person name="Boucher C.A."/>
        </authorList>
    </citation>
    <scope>NUCLEOTIDE SEQUENCE [LARGE SCALE GENOMIC DNA]</scope>
    <source>
        <strain>ATCC BAA-1114 / GMI1000</strain>
    </source>
</reference>